<accession>A3CK68</accession>
<organism>
    <name type="scientific">Streptococcus sanguinis (strain SK36)</name>
    <dbReference type="NCBI Taxonomy" id="388919"/>
    <lineage>
        <taxon>Bacteria</taxon>
        <taxon>Bacillati</taxon>
        <taxon>Bacillota</taxon>
        <taxon>Bacilli</taxon>
        <taxon>Lactobacillales</taxon>
        <taxon>Streptococcaceae</taxon>
        <taxon>Streptococcus</taxon>
    </lineage>
</organism>
<feature type="chain" id="PRO_1000052667" description="Large ribosomal subunit protein uL22">
    <location>
        <begin position="1"/>
        <end position="114"/>
    </location>
</feature>
<evidence type="ECO:0000255" key="1">
    <source>
        <dbReference type="HAMAP-Rule" id="MF_01331"/>
    </source>
</evidence>
<evidence type="ECO:0000305" key="2"/>
<comment type="function">
    <text evidence="1">This protein binds specifically to 23S rRNA; its binding is stimulated by other ribosomal proteins, e.g. L4, L17, and L20. It is important during the early stages of 50S assembly. It makes multiple contacts with different domains of the 23S rRNA in the assembled 50S subunit and ribosome (By similarity).</text>
</comment>
<comment type="function">
    <text evidence="1">The globular domain of the protein is located near the polypeptide exit tunnel on the outside of the subunit, while an extended beta-hairpin is found that lines the wall of the exit tunnel in the center of the 70S ribosome.</text>
</comment>
<comment type="subunit">
    <text evidence="1">Part of the 50S ribosomal subunit.</text>
</comment>
<comment type="similarity">
    <text evidence="1">Belongs to the universal ribosomal protein uL22 family.</text>
</comment>
<proteinExistence type="inferred from homology"/>
<protein>
    <recommendedName>
        <fullName evidence="1">Large ribosomal subunit protein uL22</fullName>
    </recommendedName>
    <alternativeName>
        <fullName evidence="2">50S ribosomal protein L22</fullName>
    </alternativeName>
</protein>
<keyword id="KW-1185">Reference proteome</keyword>
<keyword id="KW-0687">Ribonucleoprotein</keyword>
<keyword id="KW-0689">Ribosomal protein</keyword>
<keyword id="KW-0694">RNA-binding</keyword>
<keyword id="KW-0699">rRNA-binding</keyword>
<reference key="1">
    <citation type="journal article" date="2007" name="J. Bacteriol.">
        <title>Genome of the opportunistic pathogen Streptococcus sanguinis.</title>
        <authorList>
            <person name="Xu P."/>
            <person name="Alves J.M."/>
            <person name="Kitten T."/>
            <person name="Brown A."/>
            <person name="Chen Z."/>
            <person name="Ozaki L.S."/>
            <person name="Manque P."/>
            <person name="Ge X."/>
            <person name="Serrano M.G."/>
            <person name="Puiu D."/>
            <person name="Hendricks S."/>
            <person name="Wang Y."/>
            <person name="Chaplin M.D."/>
            <person name="Akan D."/>
            <person name="Paik S."/>
            <person name="Peterson D.L."/>
            <person name="Macrina F.L."/>
            <person name="Buck G.A."/>
        </authorList>
    </citation>
    <scope>NUCLEOTIDE SEQUENCE [LARGE SCALE GENOMIC DNA]</scope>
    <source>
        <strain>SK36</strain>
    </source>
</reference>
<name>RL22_STRSV</name>
<dbReference type="EMBL" id="CP000387">
    <property type="protein sequence ID" value="ABN43573.1"/>
    <property type="molecule type" value="Genomic_DNA"/>
</dbReference>
<dbReference type="RefSeq" id="WP_002894484.1">
    <property type="nucleotide sequence ID" value="NZ_CAXTYR010000005.1"/>
</dbReference>
<dbReference type="RefSeq" id="YP_001034123.1">
    <property type="nucleotide sequence ID" value="NC_009009.1"/>
</dbReference>
<dbReference type="SMR" id="A3CK68"/>
<dbReference type="STRING" id="388919.SSA_0112"/>
<dbReference type="GeneID" id="48426580"/>
<dbReference type="KEGG" id="ssa:SSA_0112"/>
<dbReference type="PATRIC" id="fig|388919.9.peg.105"/>
<dbReference type="eggNOG" id="COG0091">
    <property type="taxonomic scope" value="Bacteria"/>
</dbReference>
<dbReference type="HOGENOM" id="CLU_083987_3_3_9"/>
<dbReference type="OrthoDB" id="9805969at2"/>
<dbReference type="Proteomes" id="UP000002148">
    <property type="component" value="Chromosome"/>
</dbReference>
<dbReference type="GO" id="GO:0022625">
    <property type="term" value="C:cytosolic large ribosomal subunit"/>
    <property type="evidence" value="ECO:0007669"/>
    <property type="project" value="TreeGrafter"/>
</dbReference>
<dbReference type="GO" id="GO:0019843">
    <property type="term" value="F:rRNA binding"/>
    <property type="evidence" value="ECO:0007669"/>
    <property type="project" value="UniProtKB-UniRule"/>
</dbReference>
<dbReference type="GO" id="GO:0003735">
    <property type="term" value="F:structural constituent of ribosome"/>
    <property type="evidence" value="ECO:0007669"/>
    <property type="project" value="InterPro"/>
</dbReference>
<dbReference type="GO" id="GO:0006412">
    <property type="term" value="P:translation"/>
    <property type="evidence" value="ECO:0007669"/>
    <property type="project" value="UniProtKB-UniRule"/>
</dbReference>
<dbReference type="CDD" id="cd00336">
    <property type="entry name" value="Ribosomal_L22"/>
    <property type="match status" value="1"/>
</dbReference>
<dbReference type="FunFam" id="3.90.470.10:FF:000001">
    <property type="entry name" value="50S ribosomal protein L22"/>
    <property type="match status" value="1"/>
</dbReference>
<dbReference type="Gene3D" id="3.90.470.10">
    <property type="entry name" value="Ribosomal protein L22/L17"/>
    <property type="match status" value="1"/>
</dbReference>
<dbReference type="HAMAP" id="MF_01331_B">
    <property type="entry name" value="Ribosomal_uL22_B"/>
    <property type="match status" value="1"/>
</dbReference>
<dbReference type="InterPro" id="IPR001063">
    <property type="entry name" value="Ribosomal_uL22"/>
</dbReference>
<dbReference type="InterPro" id="IPR005727">
    <property type="entry name" value="Ribosomal_uL22_bac/chlpt-type"/>
</dbReference>
<dbReference type="InterPro" id="IPR047867">
    <property type="entry name" value="Ribosomal_uL22_bac/org-type"/>
</dbReference>
<dbReference type="InterPro" id="IPR018260">
    <property type="entry name" value="Ribosomal_uL22_CS"/>
</dbReference>
<dbReference type="InterPro" id="IPR036394">
    <property type="entry name" value="Ribosomal_uL22_sf"/>
</dbReference>
<dbReference type="NCBIfam" id="TIGR01044">
    <property type="entry name" value="rplV_bact"/>
    <property type="match status" value="1"/>
</dbReference>
<dbReference type="PANTHER" id="PTHR13501">
    <property type="entry name" value="CHLOROPLAST 50S RIBOSOMAL PROTEIN L22-RELATED"/>
    <property type="match status" value="1"/>
</dbReference>
<dbReference type="PANTHER" id="PTHR13501:SF8">
    <property type="entry name" value="LARGE RIBOSOMAL SUBUNIT PROTEIN UL22M"/>
    <property type="match status" value="1"/>
</dbReference>
<dbReference type="Pfam" id="PF00237">
    <property type="entry name" value="Ribosomal_L22"/>
    <property type="match status" value="1"/>
</dbReference>
<dbReference type="SUPFAM" id="SSF54843">
    <property type="entry name" value="Ribosomal protein L22"/>
    <property type="match status" value="1"/>
</dbReference>
<dbReference type="PROSITE" id="PS00464">
    <property type="entry name" value="RIBOSOMAL_L22"/>
    <property type="match status" value="1"/>
</dbReference>
<gene>
    <name evidence="1" type="primary">rplV</name>
    <name type="ordered locus">SSA_0112</name>
</gene>
<sequence length="114" mass="12270">MAEITSAKAMARTVRVSPRKSRLVLDNIRGKNVADAIAILKFTPNKAAGIIEKVLNSAIANAENNFGLEKANLVVSEAFANEGPTMKRFRPRAKGSASPINKRTSHITVVVAEK</sequence>